<evidence type="ECO:0000250" key="1"/>
<evidence type="ECO:0000303" key="2">
    <source>
    </source>
</evidence>
<evidence type="ECO:0000305" key="3"/>
<accession>P0DOZ4</accession>
<dbReference type="GO" id="GO:0005576">
    <property type="term" value="C:extracellular region"/>
    <property type="evidence" value="ECO:0007669"/>
    <property type="project" value="UniProtKB-SubCell"/>
</dbReference>
<dbReference type="GO" id="GO:0035792">
    <property type="term" value="C:host cell postsynaptic membrane"/>
    <property type="evidence" value="ECO:0007669"/>
    <property type="project" value="UniProtKB-KW"/>
</dbReference>
<dbReference type="GO" id="GO:0099106">
    <property type="term" value="F:ion channel regulator activity"/>
    <property type="evidence" value="ECO:0007669"/>
    <property type="project" value="UniProtKB-KW"/>
</dbReference>
<dbReference type="GO" id="GO:0090729">
    <property type="term" value="F:toxin activity"/>
    <property type="evidence" value="ECO:0007669"/>
    <property type="project" value="UniProtKB-KW"/>
</dbReference>
<sequence length="17" mass="1937">GYEEREVAETVRELDAA</sequence>
<protein>
    <recommendedName>
        <fullName evidence="2">Conantokin-Qu</fullName>
        <shortName evidence="2">Con-Qu</shortName>
    </recommendedName>
</protein>
<proteinExistence type="evidence at protein level"/>
<name>CKQ_CONQU</name>
<organism>
    <name type="scientific">Conus quercinus</name>
    <name type="common">Oak cone</name>
    <dbReference type="NCBI Taxonomy" id="101313"/>
    <lineage>
        <taxon>Eukaryota</taxon>
        <taxon>Metazoa</taxon>
        <taxon>Spiralia</taxon>
        <taxon>Lophotrochozoa</taxon>
        <taxon>Mollusca</taxon>
        <taxon>Gastropoda</taxon>
        <taxon>Caenogastropoda</taxon>
        <taxon>Neogastropoda</taxon>
        <taxon>Conoidea</taxon>
        <taxon>Conidae</taxon>
        <taxon>Conus</taxon>
        <taxon>Lividoconus</taxon>
    </lineage>
</organism>
<feature type="peptide" id="PRO_0000439371" description="Conantokin-Qu">
    <location>
        <begin position="1"/>
        <end position="17"/>
    </location>
</feature>
<feature type="modified residue" description="4-carboxyglutamate" evidence="2">
    <location>
        <position position="3"/>
    </location>
</feature>
<feature type="modified residue" description="4-carboxyglutamate" evidence="2">
    <location>
        <position position="4"/>
    </location>
</feature>
<feature type="modified residue" description="4-carboxyglutamate" evidence="2">
    <location>
        <position position="6"/>
    </location>
</feature>
<feature type="modified residue" description="4-carboxyglutamate" evidence="2">
    <location>
        <position position="9"/>
    </location>
</feature>
<feature type="modified residue" description="4-carboxyglutamate" evidence="2">
    <location>
        <position position="13"/>
    </location>
</feature>
<keyword id="KW-0301">Gamma-carboxyglutamic acid</keyword>
<keyword id="KW-0872">Ion channel impairing toxin</keyword>
<keyword id="KW-1028">Ionotropic glutamate receptor inhibitor</keyword>
<keyword id="KW-0528">Neurotoxin</keyword>
<keyword id="KW-0629">Postsynaptic neurotoxin</keyword>
<keyword id="KW-0964">Secreted</keyword>
<keyword id="KW-0800">Toxin</keyword>
<comment type="function">
    <text evidence="1">Conantokins inhibit N-methyl-D-aspartate (NMDA) receptors.</text>
</comment>
<comment type="subcellular location">
    <subcellularLocation>
        <location evidence="1">Secreted</location>
    </subcellularLocation>
</comment>
<comment type="tissue specificity">
    <text evidence="3">Expressed by the venom duct.</text>
</comment>
<comment type="miscellaneous">
    <text evidence="3">The mature peptide does not contain cysteine residue.</text>
</comment>
<reference key="1">
    <citation type="journal article" date="2006" name="Prog. Mol. Subcell. Biol.">
        <title>Hyperhydroxylation: a new strategy for neuronal targeting by venomous marine molluscs.</title>
        <authorList>
            <person name="Franco A."/>
            <person name="Pisarewicz K."/>
            <person name="Moller C."/>
            <person name="Mora D."/>
            <person name="Fields G.B."/>
            <person name="Mari F."/>
        </authorList>
    </citation>
    <scope>REVIEW</scope>
    <scope>GAMMA-CARBOXYGLUTAMATION AT GLU-3; GLU-4; GLU-6; GLU-9 AND GLU-13</scope>
</reference>